<organism>
    <name type="scientific">Homo sapiens</name>
    <name type="common">Human</name>
    <dbReference type="NCBI Taxonomy" id="9606"/>
    <lineage>
        <taxon>Eukaryota</taxon>
        <taxon>Metazoa</taxon>
        <taxon>Chordata</taxon>
        <taxon>Craniata</taxon>
        <taxon>Vertebrata</taxon>
        <taxon>Euteleostomi</taxon>
        <taxon>Mammalia</taxon>
        <taxon>Eutheria</taxon>
        <taxon>Euarchontoglires</taxon>
        <taxon>Primates</taxon>
        <taxon>Haplorrhini</taxon>
        <taxon>Catarrhini</taxon>
        <taxon>Hominidae</taxon>
        <taxon>Homo</taxon>
    </lineage>
</organism>
<feature type="chain" id="PRO_0000186101" description="CKLF-like MARVEL transmembrane domain-containing protein 3">
    <location>
        <begin position="1"/>
        <end position="182"/>
    </location>
</feature>
<feature type="transmembrane region" description="Helical" evidence="1">
    <location>
        <begin position="64"/>
        <end position="84"/>
    </location>
</feature>
<feature type="transmembrane region" description="Helical" evidence="1">
    <location>
        <begin position="101"/>
        <end position="121"/>
    </location>
</feature>
<feature type="transmembrane region" description="Helical" evidence="1">
    <location>
        <begin position="131"/>
        <end position="151"/>
    </location>
</feature>
<feature type="domain" description="MARVEL" evidence="2">
    <location>
        <begin position="36"/>
        <end position="155"/>
    </location>
</feature>
<feature type="region of interest" description="Disordered" evidence="3">
    <location>
        <begin position="1"/>
        <end position="21"/>
    </location>
</feature>
<feature type="compositionally biased region" description="Acidic residues" evidence="3">
    <location>
        <begin position="1"/>
        <end position="12"/>
    </location>
</feature>
<feature type="splice variant" id="VSP_008256" description="In isoform 2." evidence="5">
    <original>RLLLAESGLSFITFICY</original>
    <variation>PGGFVCTWCSCPHQPLW</variation>
    <location>
        <begin position="43"/>
        <end position="59"/>
    </location>
</feature>
<feature type="splice variant" id="VSP_008257" description="In isoform 2." evidence="5">
    <location>
        <begin position="60"/>
        <end position="182"/>
    </location>
</feature>
<sequence>MWPPDPDPDPDPEPAGGSRPGPAVPGLRALLPARAFLCSLKGRLLLAESGLSFITFICYVASSASAFLTAPLLEFLLALYFLFADAMQLNDKWQGLCWPMMDFLRCVTAALIYFAISITAIAKYSDGASKAAGVFGFFATIVFATDFYLIFNDVAKFLKQGDSADETTAHKTEEENSDSDSD</sequence>
<reference key="1">
    <citation type="journal article" date="2003" name="Genomics">
        <title>Identification of eight genes encoding chemokine-like factor superfamily members 1-8 (CKLFSF1-8) by in silico cloning and experimental validation.</title>
        <authorList>
            <person name="Han W."/>
            <person name="Ding P."/>
            <person name="Xu M."/>
            <person name="Wang L."/>
            <person name="Rui M."/>
            <person name="Shi S."/>
            <person name="Liu Y."/>
            <person name="Zheng Y."/>
            <person name="Chen Y."/>
            <person name="Yang T."/>
            <person name="Ma D."/>
        </authorList>
    </citation>
    <scope>NUCLEOTIDE SEQUENCE [MRNA] (ISOFORM 1)</scope>
    <scope>TISSUE SPECIFICITY</scope>
    <source>
        <tissue>Placenta</tissue>
    </source>
</reference>
<reference key="2">
    <citation type="submission" date="2002-10" db="EMBL/GenBank/DDBJ databases">
        <authorList>
            <person name="Liu Y."/>
            <person name="Han W."/>
            <person name="Shi S."/>
            <person name="Xia D."/>
            <person name="Song Q."/>
            <person name="Zhang Y."/>
            <person name="Ma D."/>
        </authorList>
    </citation>
    <scope>NUCLEOTIDE SEQUENCE [MRNA] (ISOFORM 2)</scope>
    <source>
        <tissue>Liver</tissue>
    </source>
</reference>
<reference key="3">
    <citation type="journal article" date="2004" name="Nat. Genet.">
        <title>Complete sequencing and characterization of 21,243 full-length human cDNAs.</title>
        <authorList>
            <person name="Ota T."/>
            <person name="Suzuki Y."/>
            <person name="Nishikawa T."/>
            <person name="Otsuki T."/>
            <person name="Sugiyama T."/>
            <person name="Irie R."/>
            <person name="Wakamatsu A."/>
            <person name="Hayashi K."/>
            <person name="Sato H."/>
            <person name="Nagai K."/>
            <person name="Kimura K."/>
            <person name="Makita H."/>
            <person name="Sekine M."/>
            <person name="Obayashi M."/>
            <person name="Nishi T."/>
            <person name="Shibahara T."/>
            <person name="Tanaka T."/>
            <person name="Ishii S."/>
            <person name="Yamamoto J."/>
            <person name="Saito K."/>
            <person name="Kawai Y."/>
            <person name="Isono Y."/>
            <person name="Nakamura Y."/>
            <person name="Nagahari K."/>
            <person name="Murakami K."/>
            <person name="Yasuda T."/>
            <person name="Iwayanagi T."/>
            <person name="Wagatsuma M."/>
            <person name="Shiratori A."/>
            <person name="Sudo H."/>
            <person name="Hosoiri T."/>
            <person name="Kaku Y."/>
            <person name="Kodaira H."/>
            <person name="Kondo H."/>
            <person name="Sugawara M."/>
            <person name="Takahashi M."/>
            <person name="Kanda K."/>
            <person name="Yokoi T."/>
            <person name="Furuya T."/>
            <person name="Kikkawa E."/>
            <person name="Omura Y."/>
            <person name="Abe K."/>
            <person name="Kamihara K."/>
            <person name="Katsuta N."/>
            <person name="Sato K."/>
            <person name="Tanikawa M."/>
            <person name="Yamazaki M."/>
            <person name="Ninomiya K."/>
            <person name="Ishibashi T."/>
            <person name="Yamashita H."/>
            <person name="Murakawa K."/>
            <person name="Fujimori K."/>
            <person name="Tanai H."/>
            <person name="Kimata M."/>
            <person name="Watanabe M."/>
            <person name="Hiraoka S."/>
            <person name="Chiba Y."/>
            <person name="Ishida S."/>
            <person name="Ono Y."/>
            <person name="Takiguchi S."/>
            <person name="Watanabe S."/>
            <person name="Yosida M."/>
            <person name="Hotuta T."/>
            <person name="Kusano J."/>
            <person name="Kanehori K."/>
            <person name="Takahashi-Fujii A."/>
            <person name="Hara H."/>
            <person name="Tanase T.-O."/>
            <person name="Nomura Y."/>
            <person name="Togiya S."/>
            <person name="Komai F."/>
            <person name="Hara R."/>
            <person name="Takeuchi K."/>
            <person name="Arita M."/>
            <person name="Imose N."/>
            <person name="Musashino K."/>
            <person name="Yuuki H."/>
            <person name="Oshima A."/>
            <person name="Sasaki N."/>
            <person name="Aotsuka S."/>
            <person name="Yoshikawa Y."/>
            <person name="Matsunawa H."/>
            <person name="Ichihara T."/>
            <person name="Shiohata N."/>
            <person name="Sano S."/>
            <person name="Moriya S."/>
            <person name="Momiyama H."/>
            <person name="Satoh N."/>
            <person name="Takami S."/>
            <person name="Terashima Y."/>
            <person name="Suzuki O."/>
            <person name="Nakagawa S."/>
            <person name="Senoh A."/>
            <person name="Mizoguchi H."/>
            <person name="Goto Y."/>
            <person name="Shimizu F."/>
            <person name="Wakebe H."/>
            <person name="Hishigaki H."/>
            <person name="Watanabe T."/>
            <person name="Sugiyama A."/>
            <person name="Takemoto M."/>
            <person name="Kawakami B."/>
            <person name="Yamazaki M."/>
            <person name="Watanabe K."/>
            <person name="Kumagai A."/>
            <person name="Itakura S."/>
            <person name="Fukuzumi Y."/>
            <person name="Fujimori Y."/>
            <person name="Komiyama M."/>
            <person name="Tashiro H."/>
            <person name="Tanigami A."/>
            <person name="Fujiwara T."/>
            <person name="Ono T."/>
            <person name="Yamada K."/>
            <person name="Fujii Y."/>
            <person name="Ozaki K."/>
            <person name="Hirao M."/>
            <person name="Ohmori Y."/>
            <person name="Kawabata A."/>
            <person name="Hikiji T."/>
            <person name="Kobatake N."/>
            <person name="Inagaki H."/>
            <person name="Ikema Y."/>
            <person name="Okamoto S."/>
            <person name="Okitani R."/>
            <person name="Kawakami T."/>
            <person name="Noguchi S."/>
            <person name="Itoh T."/>
            <person name="Shigeta K."/>
            <person name="Senba T."/>
            <person name="Matsumura K."/>
            <person name="Nakajima Y."/>
            <person name="Mizuno T."/>
            <person name="Morinaga M."/>
            <person name="Sasaki M."/>
            <person name="Togashi T."/>
            <person name="Oyama M."/>
            <person name="Hata H."/>
            <person name="Watanabe M."/>
            <person name="Komatsu T."/>
            <person name="Mizushima-Sugano J."/>
            <person name="Satoh T."/>
            <person name="Shirai Y."/>
            <person name="Takahashi Y."/>
            <person name="Nakagawa K."/>
            <person name="Okumura K."/>
            <person name="Nagase T."/>
            <person name="Nomura N."/>
            <person name="Kikuchi H."/>
            <person name="Masuho Y."/>
            <person name="Yamashita R."/>
            <person name="Nakai K."/>
            <person name="Yada T."/>
            <person name="Nakamura Y."/>
            <person name="Ohara O."/>
            <person name="Isogai T."/>
            <person name="Sugano S."/>
        </authorList>
    </citation>
    <scope>NUCLEOTIDE SEQUENCE [LARGE SCALE MRNA] (ISOFORM 1)</scope>
</reference>
<reference key="4">
    <citation type="journal article" date="2004" name="Nature">
        <title>The sequence and analysis of duplication-rich human chromosome 16.</title>
        <authorList>
            <person name="Martin J."/>
            <person name="Han C."/>
            <person name="Gordon L.A."/>
            <person name="Terry A."/>
            <person name="Prabhakar S."/>
            <person name="She X."/>
            <person name="Xie G."/>
            <person name="Hellsten U."/>
            <person name="Chan Y.M."/>
            <person name="Altherr M."/>
            <person name="Couronne O."/>
            <person name="Aerts A."/>
            <person name="Bajorek E."/>
            <person name="Black S."/>
            <person name="Blumer H."/>
            <person name="Branscomb E."/>
            <person name="Brown N.C."/>
            <person name="Bruno W.J."/>
            <person name="Buckingham J.M."/>
            <person name="Callen D.F."/>
            <person name="Campbell C.S."/>
            <person name="Campbell M.L."/>
            <person name="Campbell E.W."/>
            <person name="Caoile C."/>
            <person name="Challacombe J.F."/>
            <person name="Chasteen L.A."/>
            <person name="Chertkov O."/>
            <person name="Chi H.C."/>
            <person name="Christensen M."/>
            <person name="Clark L.M."/>
            <person name="Cohn J.D."/>
            <person name="Denys M."/>
            <person name="Detter J.C."/>
            <person name="Dickson M."/>
            <person name="Dimitrijevic-Bussod M."/>
            <person name="Escobar J."/>
            <person name="Fawcett J.J."/>
            <person name="Flowers D."/>
            <person name="Fotopulos D."/>
            <person name="Glavina T."/>
            <person name="Gomez M."/>
            <person name="Gonzales E."/>
            <person name="Goodstein D."/>
            <person name="Goodwin L.A."/>
            <person name="Grady D.L."/>
            <person name="Grigoriev I."/>
            <person name="Groza M."/>
            <person name="Hammon N."/>
            <person name="Hawkins T."/>
            <person name="Haydu L."/>
            <person name="Hildebrand C.E."/>
            <person name="Huang W."/>
            <person name="Israni S."/>
            <person name="Jett J."/>
            <person name="Jewett P.B."/>
            <person name="Kadner K."/>
            <person name="Kimball H."/>
            <person name="Kobayashi A."/>
            <person name="Krawczyk M.-C."/>
            <person name="Leyba T."/>
            <person name="Longmire J.L."/>
            <person name="Lopez F."/>
            <person name="Lou Y."/>
            <person name="Lowry S."/>
            <person name="Ludeman T."/>
            <person name="Manohar C.F."/>
            <person name="Mark G.A."/>
            <person name="McMurray K.L."/>
            <person name="Meincke L.J."/>
            <person name="Morgan J."/>
            <person name="Moyzis R.K."/>
            <person name="Mundt M.O."/>
            <person name="Munk A.C."/>
            <person name="Nandkeshwar R.D."/>
            <person name="Pitluck S."/>
            <person name="Pollard M."/>
            <person name="Predki P."/>
            <person name="Parson-Quintana B."/>
            <person name="Ramirez L."/>
            <person name="Rash S."/>
            <person name="Retterer J."/>
            <person name="Ricke D.O."/>
            <person name="Robinson D.L."/>
            <person name="Rodriguez A."/>
            <person name="Salamov A."/>
            <person name="Saunders E.H."/>
            <person name="Scott D."/>
            <person name="Shough T."/>
            <person name="Stallings R.L."/>
            <person name="Stalvey M."/>
            <person name="Sutherland R.D."/>
            <person name="Tapia R."/>
            <person name="Tesmer J.G."/>
            <person name="Thayer N."/>
            <person name="Thompson L.S."/>
            <person name="Tice H."/>
            <person name="Torney D.C."/>
            <person name="Tran-Gyamfi M."/>
            <person name="Tsai M."/>
            <person name="Ulanovsky L.E."/>
            <person name="Ustaszewska A."/>
            <person name="Vo N."/>
            <person name="White P.S."/>
            <person name="Williams A.L."/>
            <person name="Wills P.L."/>
            <person name="Wu J.-R."/>
            <person name="Wu K."/>
            <person name="Yang J."/>
            <person name="DeJong P."/>
            <person name="Bruce D."/>
            <person name="Doggett N.A."/>
            <person name="Deaven L."/>
            <person name="Schmutz J."/>
            <person name="Grimwood J."/>
            <person name="Richardson P."/>
            <person name="Rokhsar D.S."/>
            <person name="Eichler E.E."/>
            <person name="Gilna P."/>
            <person name="Lucas S.M."/>
            <person name="Myers R.M."/>
            <person name="Rubin E.M."/>
            <person name="Pennacchio L.A."/>
        </authorList>
    </citation>
    <scope>NUCLEOTIDE SEQUENCE [LARGE SCALE GENOMIC DNA]</scope>
</reference>
<reference key="5">
    <citation type="submission" date="2005-07" db="EMBL/GenBank/DDBJ databases">
        <authorList>
            <person name="Mural R.J."/>
            <person name="Istrail S."/>
            <person name="Sutton G.G."/>
            <person name="Florea L."/>
            <person name="Halpern A.L."/>
            <person name="Mobarry C.M."/>
            <person name="Lippert R."/>
            <person name="Walenz B."/>
            <person name="Shatkay H."/>
            <person name="Dew I."/>
            <person name="Miller J.R."/>
            <person name="Flanigan M.J."/>
            <person name="Edwards N.J."/>
            <person name="Bolanos R."/>
            <person name="Fasulo D."/>
            <person name="Halldorsson B.V."/>
            <person name="Hannenhalli S."/>
            <person name="Turner R."/>
            <person name="Yooseph S."/>
            <person name="Lu F."/>
            <person name="Nusskern D.R."/>
            <person name="Shue B.C."/>
            <person name="Zheng X.H."/>
            <person name="Zhong F."/>
            <person name="Delcher A.L."/>
            <person name="Huson D.H."/>
            <person name="Kravitz S.A."/>
            <person name="Mouchard L."/>
            <person name="Reinert K."/>
            <person name="Remington K.A."/>
            <person name="Clark A.G."/>
            <person name="Waterman M.S."/>
            <person name="Eichler E.E."/>
            <person name="Adams M.D."/>
            <person name="Hunkapiller M.W."/>
            <person name="Myers E.W."/>
            <person name="Venter J.C."/>
        </authorList>
    </citation>
    <scope>NUCLEOTIDE SEQUENCE [LARGE SCALE GENOMIC DNA]</scope>
</reference>
<reference key="6">
    <citation type="journal article" date="2004" name="Genome Res.">
        <title>The status, quality, and expansion of the NIH full-length cDNA project: the Mammalian Gene Collection (MGC).</title>
        <authorList>
            <consortium name="The MGC Project Team"/>
        </authorList>
    </citation>
    <scope>NUCLEOTIDE SEQUENCE [LARGE SCALE MRNA] (ISOFORM 1)</scope>
    <source>
        <tissue>Brain</tissue>
        <tissue>Lung</tissue>
        <tissue>Placenta</tissue>
    </source>
</reference>
<protein>
    <recommendedName>
        <fullName>CKLF-like MARVEL transmembrane domain-containing protein 3</fullName>
    </recommendedName>
    <alternativeName>
        <fullName>Chemokine-like factor superfamily member 3</fullName>
    </alternativeName>
</protein>
<name>CKLF3_HUMAN</name>
<accession>Q96MX0</accession>
<accession>A6NCL9</accession>
<accession>Q8IUU8</accession>
<accession>Q8IWQ6</accession>
<accession>Q8IYE2</accession>
<accession>Q8IZ39</accession>
<accession>Q8IZ59</accession>
<evidence type="ECO:0000255" key="1"/>
<evidence type="ECO:0000255" key="2">
    <source>
        <dbReference type="PROSITE-ProRule" id="PRU00581"/>
    </source>
</evidence>
<evidence type="ECO:0000256" key="3">
    <source>
        <dbReference type="SAM" id="MobiDB-lite"/>
    </source>
</evidence>
<evidence type="ECO:0000269" key="4">
    <source>
    </source>
</evidence>
<evidence type="ECO:0000303" key="5">
    <source ref="2"/>
</evidence>
<evidence type="ECO:0000305" key="6"/>
<comment type="interaction">
    <interactant intactId="EBI-7247651">
        <id>Q96MX0</id>
    </interactant>
    <interactant intactId="EBI-3936819">
        <id>Q6Q788</id>
        <label>APOA5</label>
    </interactant>
    <organismsDiffer>false</organismsDiffer>
    <experiments>3</experiments>
</comment>
<comment type="interaction">
    <interactant intactId="EBI-7247651">
        <id>Q96MX0</id>
    </interactant>
    <interactant intactId="EBI-13059134">
        <id>Q13520</id>
        <label>AQP6</label>
    </interactant>
    <organismsDiffer>false</organismsDiffer>
    <experiments>3</experiments>
</comment>
<comment type="interaction">
    <interactant intactId="EBI-7247651">
        <id>Q96MX0</id>
    </interactant>
    <interactant intactId="EBI-11343438">
        <id>Q3SXY8</id>
        <label>ARL13B</label>
    </interactant>
    <organismsDiffer>false</organismsDiffer>
    <experiments>3</experiments>
</comment>
<comment type="interaction">
    <interactant intactId="EBI-7247651">
        <id>Q96MX0</id>
    </interactant>
    <interactant intactId="EBI-6942903">
        <id>Q96BA8</id>
        <label>CREB3L1</label>
    </interactant>
    <organismsDiffer>false</organismsDiffer>
    <experiments>3</experiments>
</comment>
<comment type="interaction">
    <interactant intactId="EBI-7247651">
        <id>Q96MX0</id>
    </interactant>
    <interactant intactId="EBI-18535450">
        <id>Q9GZR5</id>
        <label>ELOVL4</label>
    </interactant>
    <organismsDiffer>false</organismsDiffer>
    <experiments>3</experiments>
</comment>
<comment type="interaction">
    <interactant intactId="EBI-7247651">
        <id>Q96MX0</id>
    </interactant>
    <interactant intactId="EBI-2565863">
        <id>P00488</id>
        <label>F13A1</label>
    </interactant>
    <organismsDiffer>false</organismsDiffer>
    <experiments>3</experiments>
</comment>
<comment type="interaction">
    <interactant intactId="EBI-7247651">
        <id>Q96MX0</id>
    </interactant>
    <interactant intactId="EBI-17565645">
        <id>P08034</id>
        <label>GJB1</label>
    </interactant>
    <organismsDiffer>false</organismsDiffer>
    <experiments>3</experiments>
</comment>
<comment type="interaction">
    <interactant intactId="EBI-7247651">
        <id>Q96MX0</id>
    </interactant>
    <interactant intactId="EBI-1052304">
        <id>Q8NBQ5</id>
        <label>HSD17B11</label>
    </interactant>
    <organismsDiffer>false</organismsDiffer>
    <experiments>3</experiments>
</comment>
<comment type="interaction">
    <interactant intactId="EBI-7247651">
        <id>Q96MX0</id>
    </interactant>
    <interactant intactId="EBI-12190633">
        <id>Q70UQ0-4</id>
        <label>IKBIP</label>
    </interactant>
    <organismsDiffer>false</organismsDiffer>
    <experiments>3</experiments>
</comment>
<comment type="interaction">
    <interactant intactId="EBI-7247651">
        <id>Q96MX0</id>
    </interactant>
    <interactant intactId="EBI-1031656">
        <id>Q13651</id>
        <label>IL10RA</label>
    </interactant>
    <organismsDiffer>false</organismsDiffer>
    <experiments>3</experiments>
</comment>
<comment type="interaction">
    <interactant intactId="EBI-7247651">
        <id>Q96MX0</id>
    </interactant>
    <interactant intactId="EBI-17490413">
        <id>A8MZ59</id>
        <label>LEUTX</label>
    </interactant>
    <organismsDiffer>false</organismsDiffer>
    <experiments>3</experiments>
</comment>
<comment type="interaction">
    <interactant intactId="EBI-7247651">
        <id>Q96MX0</id>
    </interactant>
    <interactant intactId="EBI-358888">
        <id>Q96AG4</id>
        <label>LRRC59</label>
    </interactant>
    <organismsDiffer>false</organismsDiffer>
    <experiments>3</experiments>
</comment>
<comment type="interaction">
    <interactant intactId="EBI-7247651">
        <id>Q96MX0</id>
    </interactant>
    <interactant intactId="EBI-373355">
        <id>Q5SR56</id>
        <label>MFSD14B</label>
    </interactant>
    <organismsDiffer>false</organismsDiffer>
    <experiments>3</experiments>
</comment>
<comment type="interaction">
    <interactant intactId="EBI-7247651">
        <id>Q96MX0</id>
    </interactant>
    <interactant intactId="EBI-748229">
        <id>Q9H8S9</id>
        <label>MOB1A</label>
    </interactant>
    <organismsDiffer>false</organismsDiffer>
    <experiments>3</experiments>
</comment>
<comment type="interaction">
    <interactant intactId="EBI-7247651">
        <id>Q96MX0</id>
    </interactant>
    <interactant intactId="EBI-9679267">
        <id>Q70IA8</id>
        <label>MOB3C</label>
    </interactant>
    <organismsDiffer>false</organismsDiffer>
    <experiments>3</experiments>
</comment>
<comment type="interaction">
    <interactant intactId="EBI-7247651">
        <id>Q96MX0</id>
    </interactant>
    <interactant intactId="EBI-5454865">
        <id>Q6IN84</id>
        <label>MRM1</label>
    </interactant>
    <organismsDiffer>false</organismsDiffer>
    <experiments>3</experiments>
</comment>
<comment type="interaction">
    <interactant intactId="EBI-7247651">
        <id>Q96MX0</id>
    </interactant>
    <interactant intactId="EBI-7545592">
        <id>Q9H6H4</id>
        <label>REEP4</label>
    </interactant>
    <organismsDiffer>false</organismsDiffer>
    <experiments>3</experiments>
</comment>
<comment type="interaction">
    <interactant intactId="EBI-7247651">
        <id>Q96MX0</id>
    </interactant>
    <interactant intactId="EBI-10192441">
        <id>Q86VR2</id>
        <label>RETREG3</label>
    </interactant>
    <organismsDiffer>false</organismsDiffer>
    <experiments>3</experiments>
</comment>
<comment type="interaction">
    <interactant intactId="EBI-7247651">
        <id>Q96MX0</id>
    </interactant>
    <interactant intactId="EBI-3923031">
        <id>Q14973</id>
        <label>SLC10A1</label>
    </interactant>
    <organismsDiffer>false</organismsDiffer>
    <experiments>3</experiments>
</comment>
<comment type="interaction">
    <interactant intactId="EBI-7247651">
        <id>Q96MX0</id>
    </interactant>
    <interactant intactId="EBI-20117546">
        <id>Q9H169-2</id>
        <label>STMN4</label>
    </interactant>
    <organismsDiffer>false</organismsDiffer>
    <experiments>3</experiments>
</comment>
<comment type="interaction">
    <interactant intactId="EBI-7247651">
        <id>Q96MX0</id>
    </interactant>
    <interactant intactId="EBI-8032987">
        <id>Q8N9I0</id>
        <label>SYT2</label>
    </interactant>
    <organismsDiffer>false</organismsDiffer>
    <experiments>3</experiments>
</comment>
<comment type="subcellular location">
    <subcellularLocation>
        <location>Membrane</location>
        <topology>Multi-pass membrane protein</topology>
    </subcellularLocation>
</comment>
<comment type="alternative products">
    <event type="alternative splicing"/>
    <isoform>
        <id>Q96MX0-1</id>
        <name>1</name>
        <sequence type="displayed"/>
    </isoform>
    <isoform>
        <id>Q96MX0-2</id>
        <name>2</name>
        <sequence type="described" ref="VSP_008256 VSP_008257"/>
    </isoform>
</comment>
<comment type="tissue specificity">
    <text evidence="4">Expressed in the leukocytes, placenta and testis.</text>
</comment>
<comment type="similarity">
    <text evidence="6">Belongs to the chemokine-like factor family.</text>
</comment>
<proteinExistence type="evidence at protein level"/>
<gene>
    <name type="primary">CMTM3</name>
    <name type="synonym">CKLFSF3</name>
</gene>
<dbReference type="EMBL" id="AF479813">
    <property type="protein sequence ID" value="AAN73435.1"/>
    <property type="molecule type" value="mRNA"/>
</dbReference>
<dbReference type="EMBL" id="AY166714">
    <property type="protein sequence ID" value="AAN75573.1"/>
    <property type="molecule type" value="mRNA"/>
</dbReference>
<dbReference type="EMBL" id="AK056324">
    <property type="protein sequence ID" value="BAB71150.1"/>
    <property type="molecule type" value="mRNA"/>
</dbReference>
<dbReference type="EMBL" id="AC018557">
    <property type="status" value="NOT_ANNOTATED_CDS"/>
    <property type="molecule type" value="Genomic_DNA"/>
</dbReference>
<dbReference type="EMBL" id="CH471092">
    <property type="protein sequence ID" value="EAW83031.1"/>
    <property type="molecule type" value="Genomic_DNA"/>
</dbReference>
<dbReference type="EMBL" id="BC023509">
    <property type="protein sequence ID" value="AAH23509.2"/>
    <property type="molecule type" value="mRNA"/>
</dbReference>
<dbReference type="EMBL" id="BC023591">
    <property type="protein sequence ID" value="AAH23591.2"/>
    <property type="molecule type" value="mRNA"/>
</dbReference>
<dbReference type="EMBL" id="BC036042">
    <property type="protein sequence ID" value="AAH36042.2"/>
    <property type="molecule type" value="mRNA"/>
</dbReference>
<dbReference type="EMBL" id="BC040227">
    <property type="protein sequence ID" value="AAH40227.2"/>
    <property type="molecule type" value="mRNA"/>
</dbReference>
<dbReference type="EMBL" id="BC047701">
    <property type="protein sequence ID" value="AAH47701.1"/>
    <property type="molecule type" value="mRNA"/>
</dbReference>
<dbReference type="CCDS" id="CCDS10815.1">
    <molecule id="Q96MX0-1"/>
</dbReference>
<dbReference type="RefSeq" id="NP_001350847.1">
    <molecule id="Q96MX0-1"/>
    <property type="nucleotide sequence ID" value="NM_001363918.2"/>
</dbReference>
<dbReference type="RefSeq" id="NP_001350852.1">
    <molecule id="Q96MX0-1"/>
    <property type="nucleotide sequence ID" value="NM_001363923.2"/>
</dbReference>
<dbReference type="RefSeq" id="NP_653202.1">
    <molecule id="Q96MX0-1"/>
    <property type="nucleotide sequence ID" value="NM_144601.5"/>
</dbReference>
<dbReference type="RefSeq" id="NP_853531.1">
    <molecule id="Q96MX0-1"/>
    <property type="nucleotide sequence ID" value="NM_181553.4"/>
</dbReference>
<dbReference type="RefSeq" id="XP_006721194.1">
    <property type="nucleotide sequence ID" value="XM_006721131.1"/>
</dbReference>
<dbReference type="RefSeq" id="XP_047289550.1">
    <molecule id="Q96MX0-1"/>
    <property type="nucleotide sequence ID" value="XM_047433594.1"/>
</dbReference>
<dbReference type="RefSeq" id="XP_054235532.1">
    <molecule id="Q96MX0-1"/>
    <property type="nucleotide sequence ID" value="XM_054379557.1"/>
</dbReference>
<dbReference type="SMR" id="Q96MX0"/>
<dbReference type="BioGRID" id="125844">
    <property type="interactions" value="31"/>
</dbReference>
<dbReference type="FunCoup" id="Q96MX0">
    <property type="interactions" value="522"/>
</dbReference>
<dbReference type="IntAct" id="Q96MX0">
    <property type="interactions" value="24"/>
</dbReference>
<dbReference type="MINT" id="Q96MX0"/>
<dbReference type="STRING" id="9606.ENSP00000400482"/>
<dbReference type="iPTMnet" id="Q96MX0"/>
<dbReference type="PhosphoSitePlus" id="Q96MX0"/>
<dbReference type="SwissPalm" id="Q96MX0"/>
<dbReference type="BioMuta" id="CMTM3"/>
<dbReference type="DMDM" id="34922036"/>
<dbReference type="jPOST" id="Q96MX0"/>
<dbReference type="MassIVE" id="Q96MX0"/>
<dbReference type="PaxDb" id="9606-ENSP00000400482"/>
<dbReference type="PeptideAtlas" id="Q96MX0"/>
<dbReference type="ProteomicsDB" id="77426">
    <molecule id="Q96MX0-1"/>
</dbReference>
<dbReference type="ProteomicsDB" id="77427">
    <molecule id="Q96MX0-2"/>
</dbReference>
<dbReference type="Antibodypedia" id="2892">
    <property type="antibodies" value="139 antibodies from 22 providers"/>
</dbReference>
<dbReference type="DNASU" id="123920"/>
<dbReference type="Ensembl" id="ENST00000361909.8">
    <molecule id="Q96MX0-1"/>
    <property type="protein sequence ID" value="ENSP00000354579.4"/>
    <property type="gene ID" value="ENSG00000140931.20"/>
</dbReference>
<dbReference type="Ensembl" id="ENST00000424011.6">
    <molecule id="Q96MX0-1"/>
    <property type="protein sequence ID" value="ENSP00000400482.2"/>
    <property type="gene ID" value="ENSG00000140931.20"/>
</dbReference>
<dbReference type="Ensembl" id="ENST00000562707.5">
    <molecule id="Q96MX0-1"/>
    <property type="protein sequence ID" value="ENSP00000455758.1"/>
    <property type="gene ID" value="ENSG00000140931.20"/>
</dbReference>
<dbReference type="Ensembl" id="ENST00000565922.1">
    <molecule id="Q96MX0-2"/>
    <property type="protein sequence ID" value="ENSP00000456426.1"/>
    <property type="gene ID" value="ENSG00000140931.20"/>
</dbReference>
<dbReference type="Ensembl" id="ENST00000567572.6">
    <molecule id="Q96MX0-1"/>
    <property type="protein sequence ID" value="ENSP00000455851.1"/>
    <property type="gene ID" value="ENSG00000140931.20"/>
</dbReference>
<dbReference type="GeneID" id="123920"/>
<dbReference type="KEGG" id="hsa:123920"/>
<dbReference type="MANE-Select" id="ENST00000567572.6">
    <property type="protein sequence ID" value="ENSP00000455851.1"/>
    <property type="RefSeq nucleotide sequence ID" value="NM_181553.4"/>
    <property type="RefSeq protein sequence ID" value="NP_853531.1"/>
</dbReference>
<dbReference type="UCSC" id="uc002epu.5">
    <molecule id="Q96MX0-1"/>
    <property type="organism name" value="human"/>
</dbReference>
<dbReference type="AGR" id="HGNC:19174"/>
<dbReference type="CTD" id="123920"/>
<dbReference type="DisGeNET" id="123920"/>
<dbReference type="GeneCards" id="CMTM3"/>
<dbReference type="HGNC" id="HGNC:19174">
    <property type="gene designation" value="CMTM3"/>
</dbReference>
<dbReference type="HPA" id="ENSG00000140931">
    <property type="expression patterns" value="Low tissue specificity"/>
</dbReference>
<dbReference type="MIM" id="607886">
    <property type="type" value="gene"/>
</dbReference>
<dbReference type="neXtProt" id="NX_Q96MX0"/>
<dbReference type="OpenTargets" id="ENSG00000140931"/>
<dbReference type="PharmGKB" id="PA38813"/>
<dbReference type="VEuPathDB" id="HostDB:ENSG00000140931"/>
<dbReference type="eggNOG" id="KOG4788">
    <property type="taxonomic scope" value="Eukaryota"/>
</dbReference>
<dbReference type="GeneTree" id="ENSGT00940000160432"/>
<dbReference type="HOGENOM" id="CLU_108546_1_0_1"/>
<dbReference type="InParanoid" id="Q96MX0"/>
<dbReference type="OMA" id="AAPFMMV"/>
<dbReference type="OrthoDB" id="9943862at2759"/>
<dbReference type="PAN-GO" id="Q96MX0">
    <property type="GO annotations" value="1 GO annotation based on evolutionary models"/>
</dbReference>
<dbReference type="PhylomeDB" id="Q96MX0"/>
<dbReference type="TreeFam" id="TF317387"/>
<dbReference type="PathwayCommons" id="Q96MX0"/>
<dbReference type="SignaLink" id="Q96MX0"/>
<dbReference type="BioGRID-ORCS" id="123920">
    <property type="hits" value="13 hits in 1150 CRISPR screens"/>
</dbReference>
<dbReference type="ChiTaRS" id="CMTM3">
    <property type="organism name" value="human"/>
</dbReference>
<dbReference type="GenomeRNAi" id="123920"/>
<dbReference type="Pharos" id="Q96MX0">
    <property type="development level" value="Tbio"/>
</dbReference>
<dbReference type="PRO" id="PR:Q96MX0"/>
<dbReference type="Proteomes" id="UP000005640">
    <property type="component" value="Chromosome 16"/>
</dbReference>
<dbReference type="RNAct" id="Q96MX0">
    <property type="molecule type" value="protein"/>
</dbReference>
<dbReference type="Bgee" id="ENSG00000140931">
    <property type="expression patterns" value="Expressed in granulocyte and 173 other cell types or tissues"/>
</dbReference>
<dbReference type="ExpressionAtlas" id="Q96MX0">
    <property type="expression patterns" value="baseline and differential"/>
</dbReference>
<dbReference type="GO" id="GO:0031410">
    <property type="term" value="C:cytoplasmic vesicle"/>
    <property type="evidence" value="ECO:0000314"/>
    <property type="project" value="CACAO"/>
</dbReference>
<dbReference type="GO" id="GO:0005829">
    <property type="term" value="C:cytosol"/>
    <property type="evidence" value="ECO:0000314"/>
    <property type="project" value="CACAO"/>
</dbReference>
<dbReference type="GO" id="GO:0005615">
    <property type="term" value="C:extracellular space"/>
    <property type="evidence" value="ECO:0007669"/>
    <property type="project" value="UniProtKB-KW"/>
</dbReference>
<dbReference type="GO" id="GO:0016020">
    <property type="term" value="C:membrane"/>
    <property type="evidence" value="ECO:0000318"/>
    <property type="project" value="GO_Central"/>
</dbReference>
<dbReference type="GO" id="GO:0031965">
    <property type="term" value="C:nuclear membrane"/>
    <property type="evidence" value="ECO:0007669"/>
    <property type="project" value="Ensembl"/>
</dbReference>
<dbReference type="GO" id="GO:0005125">
    <property type="term" value="F:cytokine activity"/>
    <property type="evidence" value="ECO:0007669"/>
    <property type="project" value="UniProtKB-KW"/>
</dbReference>
<dbReference type="GO" id="GO:0001835">
    <property type="term" value="P:blastocyst hatching"/>
    <property type="evidence" value="ECO:0007669"/>
    <property type="project" value="Ensembl"/>
</dbReference>
<dbReference type="GO" id="GO:0006935">
    <property type="term" value="P:chemotaxis"/>
    <property type="evidence" value="ECO:0007669"/>
    <property type="project" value="UniProtKB-KW"/>
</dbReference>
<dbReference type="GO" id="GO:0050861">
    <property type="term" value="P:positive regulation of B cell receptor signaling pathway"/>
    <property type="evidence" value="ECO:0007669"/>
    <property type="project" value="Ensembl"/>
</dbReference>
<dbReference type="InterPro" id="IPR008253">
    <property type="entry name" value="Marvel"/>
</dbReference>
<dbReference type="InterPro" id="IPR050578">
    <property type="entry name" value="MARVEL-CKLF_proteins"/>
</dbReference>
<dbReference type="PANTHER" id="PTHR22776:SF3">
    <property type="entry name" value="CKLF-LIKE MARVEL TRANSMEMBRANE DOMAIN-CONTAINING PROTEIN 3"/>
    <property type="match status" value="1"/>
</dbReference>
<dbReference type="PANTHER" id="PTHR22776">
    <property type="entry name" value="MARVEL-CONTAINING POTENTIAL LIPID RAFT-ASSOCIATED PROTEIN"/>
    <property type="match status" value="1"/>
</dbReference>
<dbReference type="Pfam" id="PF01284">
    <property type="entry name" value="MARVEL"/>
    <property type="match status" value="1"/>
</dbReference>
<dbReference type="PROSITE" id="PS51225">
    <property type="entry name" value="MARVEL"/>
    <property type="match status" value="1"/>
</dbReference>
<keyword id="KW-0025">Alternative splicing</keyword>
<keyword id="KW-0145">Chemotaxis</keyword>
<keyword id="KW-0202">Cytokine</keyword>
<keyword id="KW-0472">Membrane</keyword>
<keyword id="KW-1267">Proteomics identification</keyword>
<keyword id="KW-1185">Reference proteome</keyword>
<keyword id="KW-0812">Transmembrane</keyword>
<keyword id="KW-1133">Transmembrane helix</keyword>